<sequence length="111" mass="12083">MGVRKIKEKPNVCKKGDKVRVIAGKDKGTEAVVLTALPKVNKVIVEGVNIVKKHQRPTNELPQGGIVEKEAAIHVSNVQVLDKNGVAGRVGYKFVDGKKVRYNKKSGEVLD</sequence>
<name>RL24_STRPI</name>
<dbReference type="EMBL" id="CP000936">
    <property type="protein sequence ID" value="ACA36524.1"/>
    <property type="molecule type" value="Genomic_DNA"/>
</dbReference>
<dbReference type="RefSeq" id="WP_000538972.1">
    <property type="nucleotide sequence ID" value="NC_010380.1"/>
</dbReference>
<dbReference type="SMR" id="B1I8K9"/>
<dbReference type="KEGG" id="spv:SPH_0334"/>
<dbReference type="HOGENOM" id="CLU_093315_2_0_9"/>
<dbReference type="Proteomes" id="UP000002163">
    <property type="component" value="Chromosome"/>
</dbReference>
<dbReference type="GO" id="GO:1990904">
    <property type="term" value="C:ribonucleoprotein complex"/>
    <property type="evidence" value="ECO:0007669"/>
    <property type="project" value="UniProtKB-KW"/>
</dbReference>
<dbReference type="GO" id="GO:0005840">
    <property type="term" value="C:ribosome"/>
    <property type="evidence" value="ECO:0007669"/>
    <property type="project" value="UniProtKB-KW"/>
</dbReference>
<dbReference type="GO" id="GO:0019843">
    <property type="term" value="F:rRNA binding"/>
    <property type="evidence" value="ECO:0007669"/>
    <property type="project" value="UniProtKB-UniRule"/>
</dbReference>
<dbReference type="GO" id="GO:0003735">
    <property type="term" value="F:structural constituent of ribosome"/>
    <property type="evidence" value="ECO:0007669"/>
    <property type="project" value="InterPro"/>
</dbReference>
<dbReference type="GO" id="GO:0006412">
    <property type="term" value="P:translation"/>
    <property type="evidence" value="ECO:0007669"/>
    <property type="project" value="UniProtKB-UniRule"/>
</dbReference>
<dbReference type="CDD" id="cd06089">
    <property type="entry name" value="KOW_RPL26"/>
    <property type="match status" value="1"/>
</dbReference>
<dbReference type="FunFam" id="2.30.30.30:FF:000004">
    <property type="entry name" value="50S ribosomal protein L24"/>
    <property type="match status" value="1"/>
</dbReference>
<dbReference type="Gene3D" id="2.30.30.30">
    <property type="match status" value="1"/>
</dbReference>
<dbReference type="HAMAP" id="MF_01326_B">
    <property type="entry name" value="Ribosomal_uL24_B"/>
    <property type="match status" value="1"/>
</dbReference>
<dbReference type="InterPro" id="IPR005824">
    <property type="entry name" value="KOW"/>
</dbReference>
<dbReference type="InterPro" id="IPR014722">
    <property type="entry name" value="Rib_uL2_dom2"/>
</dbReference>
<dbReference type="InterPro" id="IPR003256">
    <property type="entry name" value="Ribosomal_uL24"/>
</dbReference>
<dbReference type="InterPro" id="IPR005825">
    <property type="entry name" value="Ribosomal_uL24_CS"/>
</dbReference>
<dbReference type="InterPro" id="IPR041988">
    <property type="entry name" value="Ribosomal_uL24_KOW"/>
</dbReference>
<dbReference type="InterPro" id="IPR008991">
    <property type="entry name" value="Translation_prot_SH3-like_sf"/>
</dbReference>
<dbReference type="NCBIfam" id="TIGR01079">
    <property type="entry name" value="rplX_bact"/>
    <property type="match status" value="1"/>
</dbReference>
<dbReference type="PANTHER" id="PTHR12903">
    <property type="entry name" value="MITOCHONDRIAL RIBOSOMAL PROTEIN L24"/>
    <property type="match status" value="1"/>
</dbReference>
<dbReference type="Pfam" id="PF00467">
    <property type="entry name" value="KOW"/>
    <property type="match status" value="1"/>
</dbReference>
<dbReference type="Pfam" id="PF17136">
    <property type="entry name" value="ribosomal_L24"/>
    <property type="match status" value="1"/>
</dbReference>
<dbReference type="SMART" id="SM00739">
    <property type="entry name" value="KOW"/>
    <property type="match status" value="1"/>
</dbReference>
<dbReference type="SUPFAM" id="SSF50104">
    <property type="entry name" value="Translation proteins SH3-like domain"/>
    <property type="match status" value="1"/>
</dbReference>
<dbReference type="PROSITE" id="PS01108">
    <property type="entry name" value="RIBOSOMAL_L24"/>
    <property type="match status" value="1"/>
</dbReference>
<feature type="chain" id="PRO_0000355720" description="Large ribosomal subunit protein uL24">
    <location>
        <begin position="1"/>
        <end position="111"/>
    </location>
</feature>
<accession>B1I8K9</accession>
<protein>
    <recommendedName>
        <fullName evidence="1">Large ribosomal subunit protein uL24</fullName>
    </recommendedName>
    <alternativeName>
        <fullName evidence="2">50S ribosomal protein L24</fullName>
    </alternativeName>
</protein>
<proteinExistence type="inferred from homology"/>
<gene>
    <name evidence="1" type="primary">rplX</name>
    <name type="ordered locus">SPH_0334</name>
</gene>
<keyword id="KW-0687">Ribonucleoprotein</keyword>
<keyword id="KW-0689">Ribosomal protein</keyword>
<keyword id="KW-0694">RNA-binding</keyword>
<keyword id="KW-0699">rRNA-binding</keyword>
<evidence type="ECO:0000255" key="1">
    <source>
        <dbReference type="HAMAP-Rule" id="MF_01326"/>
    </source>
</evidence>
<evidence type="ECO:0000305" key="2"/>
<reference key="1">
    <citation type="journal article" date="2010" name="Genome Biol.">
        <title>Structure and dynamics of the pan-genome of Streptococcus pneumoniae and closely related species.</title>
        <authorList>
            <person name="Donati C."/>
            <person name="Hiller N.L."/>
            <person name="Tettelin H."/>
            <person name="Muzzi A."/>
            <person name="Croucher N.J."/>
            <person name="Angiuoli S.V."/>
            <person name="Oggioni M."/>
            <person name="Dunning Hotopp J.C."/>
            <person name="Hu F.Z."/>
            <person name="Riley D.R."/>
            <person name="Covacci A."/>
            <person name="Mitchell T.J."/>
            <person name="Bentley S.D."/>
            <person name="Kilian M."/>
            <person name="Ehrlich G.D."/>
            <person name="Rappuoli R."/>
            <person name="Moxon E.R."/>
            <person name="Masignani V."/>
        </authorList>
    </citation>
    <scope>NUCLEOTIDE SEQUENCE [LARGE SCALE GENOMIC DNA]</scope>
    <source>
        <strain>Hungary19A-6</strain>
    </source>
</reference>
<organism>
    <name type="scientific">Streptococcus pneumoniae (strain Hungary19A-6)</name>
    <dbReference type="NCBI Taxonomy" id="487214"/>
    <lineage>
        <taxon>Bacteria</taxon>
        <taxon>Bacillati</taxon>
        <taxon>Bacillota</taxon>
        <taxon>Bacilli</taxon>
        <taxon>Lactobacillales</taxon>
        <taxon>Streptococcaceae</taxon>
        <taxon>Streptococcus</taxon>
    </lineage>
</organism>
<comment type="function">
    <text evidence="1">One of two assembly initiator proteins, it binds directly to the 5'-end of the 23S rRNA, where it nucleates assembly of the 50S subunit.</text>
</comment>
<comment type="function">
    <text evidence="1">One of the proteins that surrounds the polypeptide exit tunnel on the outside of the subunit.</text>
</comment>
<comment type="subunit">
    <text evidence="1">Part of the 50S ribosomal subunit.</text>
</comment>
<comment type="similarity">
    <text evidence="1">Belongs to the universal ribosomal protein uL24 family.</text>
</comment>